<protein>
    <recommendedName>
        <fullName>Uncharacterized protein L690</fullName>
    </recommendedName>
</protein>
<accession>Q5UNV3</accession>
<proteinExistence type="evidence at protein level"/>
<evidence type="ECO:0000269" key="1">
    <source>
    </source>
</evidence>
<evidence type="ECO:0000305" key="2"/>
<organismHost>
    <name type="scientific">Acanthamoeba polyphaga</name>
    <name type="common">Amoeba</name>
    <dbReference type="NCBI Taxonomy" id="5757"/>
</organismHost>
<reference key="1">
    <citation type="journal article" date="2004" name="Science">
        <title>The 1.2-megabase genome sequence of Mimivirus.</title>
        <authorList>
            <person name="Raoult D."/>
            <person name="Audic S."/>
            <person name="Robert C."/>
            <person name="Abergel C."/>
            <person name="Renesto P."/>
            <person name="Ogata H."/>
            <person name="La Scola B."/>
            <person name="Susan M."/>
            <person name="Claverie J.-M."/>
        </authorList>
    </citation>
    <scope>NUCLEOTIDE SEQUENCE [LARGE SCALE GENOMIC DNA]</scope>
    <source>
        <strain>Rowbotham-Bradford</strain>
    </source>
</reference>
<reference key="2">
    <citation type="journal article" date="2006" name="J. Virol.">
        <title>Mimivirus giant particles incorporate a large fraction of anonymous and unique gene products.</title>
        <authorList>
            <person name="Renesto P."/>
            <person name="Abergel C."/>
            <person name="Decloquement P."/>
            <person name="Moinier D."/>
            <person name="Azza S."/>
            <person name="Ogata H."/>
            <person name="Fourquet P."/>
            <person name="Gorvel J.-P."/>
            <person name="Claverie J.-M."/>
            <person name="Raoult D."/>
        </authorList>
    </citation>
    <scope>IDENTIFICATION BY MASS SPECTROMETRY [LARGE SCALE ANALYSIS]</scope>
    <scope>SUBCELLULAR LOCATION</scope>
</reference>
<dbReference type="EMBL" id="AY653733">
    <property type="protein sequence ID" value="AAV50951.1"/>
    <property type="molecule type" value="Genomic_DNA"/>
</dbReference>
<dbReference type="KEGG" id="vg:9925341"/>
<dbReference type="OrthoDB" id="4749at10239"/>
<dbReference type="Proteomes" id="UP000001134">
    <property type="component" value="Genome"/>
</dbReference>
<dbReference type="GO" id="GO:0044423">
    <property type="term" value="C:virion component"/>
    <property type="evidence" value="ECO:0007669"/>
    <property type="project" value="UniProtKB-KW"/>
</dbReference>
<dbReference type="Gene3D" id="2.120.10.30">
    <property type="entry name" value="TolB, C-terminal domain"/>
    <property type="match status" value="1"/>
</dbReference>
<dbReference type="InterPro" id="IPR011042">
    <property type="entry name" value="6-blade_b-propeller_TolB-like"/>
</dbReference>
<dbReference type="InterPro" id="IPR017549">
    <property type="entry name" value="APMV_L690"/>
</dbReference>
<dbReference type="NCBIfam" id="TIGR03118">
    <property type="entry name" value="PEPCTERM_chp_1"/>
    <property type="match status" value="1"/>
</dbReference>
<dbReference type="SUPFAM" id="SSF101898">
    <property type="entry name" value="NHL repeat"/>
    <property type="match status" value="1"/>
</dbReference>
<comment type="subcellular location">
    <subcellularLocation>
        <location evidence="1">Virion</location>
    </subcellularLocation>
</comment>
<comment type="similarity">
    <text evidence="2">Belongs to the mimivirus R640 family.</text>
</comment>
<sequence length="374" mass="40921">MQFQSVGNCAPCKDPCPLKSFCDPGLSNTCNIQPFVNPFGPRRAVATWKVNYLISNRNVLAAHCDPDLINPWGIVIYNNQLWVVCNNTDSITNYDLFGNKLLGTISIRNASHNPSYPTGIAINCGGGFSISTGNISRGGLMLTCSEHGTCHSFNPVVDPLHSFIVLNQQITGEVSVYRGLCIANNTLYLADFFQRHIDVFDQNFNRLIGYPFVDNDGSDPIPLNYGPSNIVNIGCFLYILWAKKDPNITLYAVDEPGAGYISVFNLDGSFVRRFTSRGVLNNPWGMIPAPAECGFPPGSFLVGNHGDGRINIFDCNGRYVGPVLAMTGLPLVIDGIRGLAPHYTDFSEIYFSAACDEMTDGLVGSLVKDQVIYF</sequence>
<gene>
    <name type="ordered locus">MIMI_L690</name>
</gene>
<keyword id="KW-1185">Reference proteome</keyword>
<keyword id="KW-0946">Virion</keyword>
<organism>
    <name type="scientific">Acanthamoeba polyphaga mimivirus</name>
    <name type="common">APMV</name>
    <dbReference type="NCBI Taxonomy" id="212035"/>
    <lineage>
        <taxon>Viruses</taxon>
        <taxon>Varidnaviria</taxon>
        <taxon>Bamfordvirae</taxon>
        <taxon>Nucleocytoviricota</taxon>
        <taxon>Megaviricetes</taxon>
        <taxon>Imitervirales</taxon>
        <taxon>Mimiviridae</taxon>
        <taxon>Megamimivirinae</taxon>
        <taxon>Mimivirus</taxon>
        <taxon>Mimivirus bradfordmassiliense</taxon>
    </lineage>
</organism>
<name>YL690_MIMIV</name>
<feature type="chain" id="PRO_0000071320" description="Uncharacterized protein L690">
    <location>
        <begin position="1"/>
        <end position="374"/>
    </location>
</feature>